<comment type="subcellular location">
    <subcellularLocation>
        <location evidence="1">Mitochondrion membrane</location>
        <topology evidence="1">Peripheral membrane protein</topology>
    </subcellularLocation>
</comment>
<comment type="domain">
    <text>The PX domain binds phosphatidylinositol 3-phosphate which is necessary for peripheral membrane localization.</text>
</comment>
<dbReference type="EMBL" id="CU329672">
    <property type="protein sequence ID" value="CAB40179.1"/>
    <property type="molecule type" value="Genomic_DNA"/>
</dbReference>
<dbReference type="PIR" id="T40994">
    <property type="entry name" value="T40994"/>
</dbReference>
<dbReference type="RefSeq" id="NP_588311.1">
    <property type="nucleotide sequence ID" value="NM_001023301.2"/>
</dbReference>
<dbReference type="BioGRID" id="275556">
    <property type="interactions" value="7"/>
</dbReference>
<dbReference type="FunCoup" id="Q9Y7N9">
    <property type="interactions" value="20"/>
</dbReference>
<dbReference type="STRING" id="284812.Q9Y7N9"/>
<dbReference type="iPTMnet" id="Q9Y7N9"/>
<dbReference type="PaxDb" id="4896-SPCC1450.12.1"/>
<dbReference type="EnsemblFungi" id="SPCC1450.12.1">
    <property type="protein sequence ID" value="SPCC1450.12.1:pep"/>
    <property type="gene ID" value="SPCC1450.12"/>
</dbReference>
<dbReference type="KEGG" id="spo:2538982"/>
<dbReference type="PomBase" id="SPCC1450.12"/>
<dbReference type="VEuPathDB" id="FungiDB:SPCC1450.12"/>
<dbReference type="eggNOG" id="KOG2273">
    <property type="taxonomic scope" value="Eukaryota"/>
</dbReference>
<dbReference type="HOGENOM" id="CLU_007739_1_1_1"/>
<dbReference type="InParanoid" id="Q9Y7N9"/>
<dbReference type="OMA" id="QGFREND"/>
<dbReference type="PhylomeDB" id="Q9Y7N9"/>
<dbReference type="PRO" id="PR:Q9Y7N9"/>
<dbReference type="Proteomes" id="UP000002485">
    <property type="component" value="Chromosome III"/>
</dbReference>
<dbReference type="GO" id="GO:0031966">
    <property type="term" value="C:mitochondrial membrane"/>
    <property type="evidence" value="ECO:0007669"/>
    <property type="project" value="UniProtKB-SubCell"/>
</dbReference>
<dbReference type="GO" id="GO:0005739">
    <property type="term" value="C:mitochondrion"/>
    <property type="evidence" value="ECO:0000266"/>
    <property type="project" value="PomBase"/>
</dbReference>
<dbReference type="GO" id="GO:0035091">
    <property type="term" value="F:phosphatidylinositol binding"/>
    <property type="evidence" value="ECO:0000318"/>
    <property type="project" value="GO_Central"/>
</dbReference>
<dbReference type="CDD" id="cd06869">
    <property type="entry name" value="PX_UP2_fungi"/>
    <property type="match status" value="1"/>
</dbReference>
<dbReference type="Gene3D" id="3.30.1520.10">
    <property type="entry name" value="Phox-like domain"/>
    <property type="match status" value="1"/>
</dbReference>
<dbReference type="InterPro" id="IPR047168">
    <property type="entry name" value="LEC1-like"/>
</dbReference>
<dbReference type="InterPro" id="IPR024554">
    <property type="entry name" value="LEC1-like_C"/>
</dbReference>
<dbReference type="InterPro" id="IPR024555">
    <property type="entry name" value="PX-associated"/>
</dbReference>
<dbReference type="InterPro" id="IPR001683">
    <property type="entry name" value="PX_dom"/>
</dbReference>
<dbReference type="InterPro" id="IPR036871">
    <property type="entry name" value="PX_dom_sf"/>
</dbReference>
<dbReference type="PANTHER" id="PTHR47185">
    <property type="entry name" value="PX DOMAIN-CONTAINING PROTEIN YPR097W"/>
    <property type="match status" value="1"/>
</dbReference>
<dbReference type="PANTHER" id="PTHR47185:SF1">
    <property type="entry name" value="PX DOMAIN-CONTAINING PROTEIN YPR097W"/>
    <property type="match status" value="1"/>
</dbReference>
<dbReference type="Pfam" id="PF12825">
    <property type="entry name" value="DUF3818"/>
    <property type="match status" value="2"/>
</dbReference>
<dbReference type="Pfam" id="PF00787">
    <property type="entry name" value="PX"/>
    <property type="match status" value="1"/>
</dbReference>
<dbReference type="Pfam" id="PF12828">
    <property type="entry name" value="PXB"/>
    <property type="match status" value="1"/>
</dbReference>
<dbReference type="SMART" id="SM00312">
    <property type="entry name" value="PX"/>
    <property type="match status" value="1"/>
</dbReference>
<dbReference type="SUPFAM" id="SSF64268">
    <property type="entry name" value="PX domain"/>
    <property type="match status" value="1"/>
</dbReference>
<dbReference type="PROSITE" id="PS50195">
    <property type="entry name" value="PX"/>
    <property type="match status" value="1"/>
</dbReference>
<sequence>MDTASPEEIDALKRHYLKKELFSLLIADELNFVSEPTNLDHLGSPFVEKGKSVIPYEKSQIPVLRFIFKRFILTFPFLDPDSQNQLWNVNFRNLLKSLSKSNVSVLPDDSDATHLHKWLLKFQNMLTLLMSRAFHSIQDEKNINIELLDTPKLEKDLHKSELQQKPNILEAYVLGVRQSTQAKMLRTKRVYEYLIKVSYEENTFFIARKYSDFSHFHHLLLKSYPNAYVPRLPPKDDHDTYLNSSEDSTLSPLPSRSSDTNDPQSDSQHVLRQERMRIELRQYIKNILNDDELHLTEEVLSFLTDDPVTLTASELTDINFRQELDVIRQLEQQKFVEIASQRAKELDVYMEEFKRSLTENNGFTTLFTELKEKNSISELSPSLQKTIEWARVNLASTIYDTFIGKEKSLETYLQIKKMHQLFPYTVIKNIMRFSNPLSVMKRILDTLLAQPFGMKSLFQRLLSISLNENVRAIHKLISRYEARIVSPEILTKIQEQVENPCKAAREVLEKKQMKRHDYLYFILISDDVPPKLPDNLIRRVYAERTAWKAALDSEDYPTDPTVIRRSKRYGYMMKLMHLYAKQFNKRRSISLISEGATGEIMKSMVDSPELNPNILVEQFIDLVRRHEDSFYDFVHRVYLHDSGLFASLMEWIENIIGFLRQGTSAPIDMDLVVDALDEESRQALDVELNKLLKWNQRKKSALFLRKTTKYIPGEETSLPVTMDELGIDEEIMAELRGDEDDQDENDQVTKVEEEHMEDDDSVEEFDPIIEERQRMKRKANRPANIIPPKPKLRTVKTLLPAFKEQVYPILHKFVSENEKDI</sequence>
<keyword id="KW-0472">Membrane</keyword>
<keyword id="KW-0496">Mitochondrion</keyword>
<keyword id="KW-0597">Phosphoprotein</keyword>
<keyword id="KW-1185">Reference proteome</keyword>
<feature type="chain" id="PRO_0000315963" description="PX domain-containing protein C1450.12">
    <location>
        <begin position="1"/>
        <end position="821"/>
    </location>
</feature>
<feature type="domain" description="PX" evidence="2">
    <location>
        <begin position="171"/>
        <end position="310"/>
    </location>
</feature>
<feature type="region of interest" description="Disordered" evidence="3">
    <location>
        <begin position="235"/>
        <end position="271"/>
    </location>
</feature>
<feature type="region of interest" description="Disordered" evidence="3">
    <location>
        <begin position="737"/>
        <end position="766"/>
    </location>
</feature>
<feature type="compositionally biased region" description="Polar residues" evidence="3">
    <location>
        <begin position="241"/>
        <end position="268"/>
    </location>
</feature>
<feature type="compositionally biased region" description="Acidic residues" evidence="3">
    <location>
        <begin position="737"/>
        <end position="746"/>
    </location>
</feature>
<feature type="compositionally biased region" description="Acidic residues" evidence="3">
    <location>
        <begin position="754"/>
        <end position="766"/>
    </location>
</feature>
<feature type="modified residue" description="Phosphothreonine" evidence="4">
    <location>
        <position position="260"/>
    </location>
</feature>
<feature type="modified residue" description="Phosphothreonine" evidence="4">
    <location>
        <position position="597"/>
    </location>
</feature>
<feature type="modified residue" description="Phosphoserine" evidence="4">
    <location>
        <position position="761"/>
    </location>
</feature>
<name>YCKC_SCHPO</name>
<reference key="1">
    <citation type="journal article" date="2002" name="Nature">
        <title>The genome sequence of Schizosaccharomyces pombe.</title>
        <authorList>
            <person name="Wood V."/>
            <person name="Gwilliam R."/>
            <person name="Rajandream M.A."/>
            <person name="Lyne M.H."/>
            <person name="Lyne R."/>
            <person name="Stewart A."/>
            <person name="Sgouros J.G."/>
            <person name="Peat N."/>
            <person name="Hayles J."/>
            <person name="Baker S.G."/>
            <person name="Basham D."/>
            <person name="Bowman S."/>
            <person name="Brooks K."/>
            <person name="Brown D."/>
            <person name="Brown S."/>
            <person name="Chillingworth T."/>
            <person name="Churcher C.M."/>
            <person name="Collins M."/>
            <person name="Connor R."/>
            <person name="Cronin A."/>
            <person name="Davis P."/>
            <person name="Feltwell T."/>
            <person name="Fraser A."/>
            <person name="Gentles S."/>
            <person name="Goble A."/>
            <person name="Hamlin N."/>
            <person name="Harris D.E."/>
            <person name="Hidalgo J."/>
            <person name="Hodgson G."/>
            <person name="Holroyd S."/>
            <person name="Hornsby T."/>
            <person name="Howarth S."/>
            <person name="Huckle E.J."/>
            <person name="Hunt S."/>
            <person name="Jagels K."/>
            <person name="James K.D."/>
            <person name="Jones L."/>
            <person name="Jones M."/>
            <person name="Leather S."/>
            <person name="McDonald S."/>
            <person name="McLean J."/>
            <person name="Mooney P."/>
            <person name="Moule S."/>
            <person name="Mungall K.L."/>
            <person name="Murphy L.D."/>
            <person name="Niblett D."/>
            <person name="Odell C."/>
            <person name="Oliver K."/>
            <person name="O'Neil S."/>
            <person name="Pearson D."/>
            <person name="Quail M.A."/>
            <person name="Rabbinowitsch E."/>
            <person name="Rutherford K.M."/>
            <person name="Rutter S."/>
            <person name="Saunders D."/>
            <person name="Seeger K."/>
            <person name="Sharp S."/>
            <person name="Skelton J."/>
            <person name="Simmonds M.N."/>
            <person name="Squares R."/>
            <person name="Squares S."/>
            <person name="Stevens K."/>
            <person name="Taylor K."/>
            <person name="Taylor R.G."/>
            <person name="Tivey A."/>
            <person name="Walsh S.V."/>
            <person name="Warren T."/>
            <person name="Whitehead S."/>
            <person name="Woodward J.R."/>
            <person name="Volckaert G."/>
            <person name="Aert R."/>
            <person name="Robben J."/>
            <person name="Grymonprez B."/>
            <person name="Weltjens I."/>
            <person name="Vanstreels E."/>
            <person name="Rieger M."/>
            <person name="Schaefer M."/>
            <person name="Mueller-Auer S."/>
            <person name="Gabel C."/>
            <person name="Fuchs M."/>
            <person name="Duesterhoeft A."/>
            <person name="Fritzc C."/>
            <person name="Holzer E."/>
            <person name="Moestl D."/>
            <person name="Hilbert H."/>
            <person name="Borzym K."/>
            <person name="Langer I."/>
            <person name="Beck A."/>
            <person name="Lehrach H."/>
            <person name="Reinhardt R."/>
            <person name="Pohl T.M."/>
            <person name="Eger P."/>
            <person name="Zimmermann W."/>
            <person name="Wedler H."/>
            <person name="Wambutt R."/>
            <person name="Purnelle B."/>
            <person name="Goffeau A."/>
            <person name="Cadieu E."/>
            <person name="Dreano S."/>
            <person name="Gloux S."/>
            <person name="Lelaure V."/>
            <person name="Mottier S."/>
            <person name="Galibert F."/>
            <person name="Aves S.J."/>
            <person name="Xiang Z."/>
            <person name="Hunt C."/>
            <person name="Moore K."/>
            <person name="Hurst S.M."/>
            <person name="Lucas M."/>
            <person name="Rochet M."/>
            <person name="Gaillardin C."/>
            <person name="Tallada V.A."/>
            <person name="Garzon A."/>
            <person name="Thode G."/>
            <person name="Daga R.R."/>
            <person name="Cruzado L."/>
            <person name="Jimenez J."/>
            <person name="Sanchez M."/>
            <person name="del Rey F."/>
            <person name="Benito J."/>
            <person name="Dominguez A."/>
            <person name="Revuelta J.L."/>
            <person name="Moreno S."/>
            <person name="Armstrong J."/>
            <person name="Forsburg S.L."/>
            <person name="Cerutti L."/>
            <person name="Lowe T."/>
            <person name="McCombie W.R."/>
            <person name="Paulsen I."/>
            <person name="Potashkin J."/>
            <person name="Shpakovski G.V."/>
            <person name="Ussery D."/>
            <person name="Barrell B.G."/>
            <person name="Nurse P."/>
        </authorList>
    </citation>
    <scope>NUCLEOTIDE SEQUENCE [LARGE SCALE GENOMIC DNA]</scope>
    <source>
        <strain>972 / ATCC 24843</strain>
    </source>
</reference>
<reference key="2">
    <citation type="journal article" date="2008" name="J. Proteome Res.">
        <title>Phosphoproteome analysis of fission yeast.</title>
        <authorList>
            <person name="Wilson-Grady J.T."/>
            <person name="Villen J."/>
            <person name="Gygi S.P."/>
        </authorList>
    </citation>
    <scope>PHOSPHORYLATION [LARGE SCALE ANALYSIS] AT THR-260; THR-597 AND SER-761</scope>
    <scope>IDENTIFICATION BY MASS SPECTROMETRY</scope>
</reference>
<accession>Q9Y7N9</accession>
<protein>
    <recommendedName>
        <fullName>PX domain-containing protein C1450.12</fullName>
    </recommendedName>
</protein>
<organism>
    <name type="scientific">Schizosaccharomyces pombe (strain 972 / ATCC 24843)</name>
    <name type="common">Fission yeast</name>
    <dbReference type="NCBI Taxonomy" id="284812"/>
    <lineage>
        <taxon>Eukaryota</taxon>
        <taxon>Fungi</taxon>
        <taxon>Dikarya</taxon>
        <taxon>Ascomycota</taxon>
        <taxon>Taphrinomycotina</taxon>
        <taxon>Schizosaccharomycetes</taxon>
        <taxon>Schizosaccharomycetales</taxon>
        <taxon>Schizosaccharomycetaceae</taxon>
        <taxon>Schizosaccharomyces</taxon>
    </lineage>
</organism>
<proteinExistence type="evidence at protein level"/>
<evidence type="ECO:0000250" key="1"/>
<evidence type="ECO:0000255" key="2">
    <source>
        <dbReference type="PROSITE-ProRule" id="PRU00147"/>
    </source>
</evidence>
<evidence type="ECO:0000256" key="3">
    <source>
        <dbReference type="SAM" id="MobiDB-lite"/>
    </source>
</evidence>
<evidence type="ECO:0000269" key="4">
    <source>
    </source>
</evidence>
<gene>
    <name type="ORF">SPCC1450.12</name>
</gene>